<gene>
    <name evidence="1" type="primary">engB</name>
    <name type="ordered locus">lhv_0898</name>
</gene>
<comment type="function">
    <text evidence="1">Necessary for normal cell division and for the maintenance of normal septation.</text>
</comment>
<comment type="cofactor">
    <cofactor evidence="1">
        <name>Mg(2+)</name>
        <dbReference type="ChEBI" id="CHEBI:18420"/>
    </cofactor>
</comment>
<comment type="similarity">
    <text evidence="1">Belongs to the TRAFAC class TrmE-Era-EngA-EngB-Septin-like GTPase superfamily. EngB GTPase family.</text>
</comment>
<organism>
    <name type="scientific">Lactobacillus helveticus (strain DPC 4571)</name>
    <dbReference type="NCBI Taxonomy" id="405566"/>
    <lineage>
        <taxon>Bacteria</taxon>
        <taxon>Bacillati</taxon>
        <taxon>Bacillota</taxon>
        <taxon>Bacilli</taxon>
        <taxon>Lactobacillales</taxon>
        <taxon>Lactobacillaceae</taxon>
        <taxon>Lactobacillus</taxon>
    </lineage>
</organism>
<name>ENGB_LACH4</name>
<keyword id="KW-0131">Cell cycle</keyword>
<keyword id="KW-0132">Cell division</keyword>
<keyword id="KW-0342">GTP-binding</keyword>
<keyword id="KW-0460">Magnesium</keyword>
<keyword id="KW-0479">Metal-binding</keyword>
<keyword id="KW-0547">Nucleotide-binding</keyword>
<keyword id="KW-0717">Septation</keyword>
<sequence length="196" mass="22458">MIIKSSNYAVSAVREDQYPKDNLPEIALSGRSNVGKSSLINTLLNRKNLARTSSQPGKTQTLNFYLINDEFYLVDVPGYGYARVSQKKRQEFGEMIQDYLETRPNLKGLVILIDSRHEPTKDDIAMYNYAQYLNLPILVVCTKIDKIKKSQVNKVMSRLKKNIDLNYDYVTVLTFSSVTKLHVAELGNWIEEKISK</sequence>
<proteinExistence type="inferred from homology"/>
<evidence type="ECO:0000255" key="1">
    <source>
        <dbReference type="HAMAP-Rule" id="MF_00321"/>
    </source>
</evidence>
<feature type="chain" id="PRO_1000072018" description="Probable GTP-binding protein EngB">
    <location>
        <begin position="1"/>
        <end position="196"/>
    </location>
</feature>
<feature type="domain" description="EngB-type G" evidence="1">
    <location>
        <begin position="22"/>
        <end position="196"/>
    </location>
</feature>
<feature type="binding site" evidence="1">
    <location>
        <begin position="30"/>
        <end position="37"/>
    </location>
    <ligand>
        <name>GTP</name>
        <dbReference type="ChEBI" id="CHEBI:37565"/>
    </ligand>
</feature>
<feature type="binding site" evidence="1">
    <location>
        <position position="37"/>
    </location>
    <ligand>
        <name>Mg(2+)</name>
        <dbReference type="ChEBI" id="CHEBI:18420"/>
    </ligand>
</feature>
<feature type="binding site" evidence="1">
    <location>
        <begin position="57"/>
        <end position="61"/>
    </location>
    <ligand>
        <name>GTP</name>
        <dbReference type="ChEBI" id="CHEBI:37565"/>
    </ligand>
</feature>
<feature type="binding site" evidence="1">
    <location>
        <position position="59"/>
    </location>
    <ligand>
        <name>Mg(2+)</name>
        <dbReference type="ChEBI" id="CHEBI:18420"/>
    </ligand>
</feature>
<feature type="binding site" evidence="1">
    <location>
        <begin position="75"/>
        <end position="78"/>
    </location>
    <ligand>
        <name>GTP</name>
        <dbReference type="ChEBI" id="CHEBI:37565"/>
    </ligand>
</feature>
<feature type="binding site" evidence="1">
    <location>
        <begin position="142"/>
        <end position="145"/>
    </location>
    <ligand>
        <name>GTP</name>
        <dbReference type="ChEBI" id="CHEBI:37565"/>
    </ligand>
</feature>
<feature type="binding site" evidence="1">
    <location>
        <begin position="175"/>
        <end position="177"/>
    </location>
    <ligand>
        <name>GTP</name>
        <dbReference type="ChEBI" id="CHEBI:37565"/>
    </ligand>
</feature>
<protein>
    <recommendedName>
        <fullName evidence="1">Probable GTP-binding protein EngB</fullName>
    </recommendedName>
</protein>
<accession>A8YUS5</accession>
<dbReference type="EMBL" id="CP000517">
    <property type="protein sequence ID" value="ABX27013.1"/>
    <property type="molecule type" value="Genomic_DNA"/>
</dbReference>
<dbReference type="SMR" id="A8YUS5"/>
<dbReference type="KEGG" id="lhe:lhv_0898"/>
<dbReference type="eggNOG" id="COG0218">
    <property type="taxonomic scope" value="Bacteria"/>
</dbReference>
<dbReference type="HOGENOM" id="CLU_033732_3_0_9"/>
<dbReference type="Proteomes" id="UP000000790">
    <property type="component" value="Chromosome"/>
</dbReference>
<dbReference type="GO" id="GO:0005829">
    <property type="term" value="C:cytosol"/>
    <property type="evidence" value="ECO:0007669"/>
    <property type="project" value="TreeGrafter"/>
</dbReference>
<dbReference type="GO" id="GO:0005525">
    <property type="term" value="F:GTP binding"/>
    <property type="evidence" value="ECO:0007669"/>
    <property type="project" value="UniProtKB-UniRule"/>
</dbReference>
<dbReference type="GO" id="GO:0046872">
    <property type="term" value="F:metal ion binding"/>
    <property type="evidence" value="ECO:0007669"/>
    <property type="project" value="UniProtKB-KW"/>
</dbReference>
<dbReference type="GO" id="GO:0000917">
    <property type="term" value="P:division septum assembly"/>
    <property type="evidence" value="ECO:0007669"/>
    <property type="project" value="UniProtKB-KW"/>
</dbReference>
<dbReference type="CDD" id="cd01876">
    <property type="entry name" value="YihA_EngB"/>
    <property type="match status" value="1"/>
</dbReference>
<dbReference type="FunFam" id="3.40.50.300:FF:000098">
    <property type="entry name" value="Probable GTP-binding protein EngB"/>
    <property type="match status" value="1"/>
</dbReference>
<dbReference type="Gene3D" id="3.40.50.300">
    <property type="entry name" value="P-loop containing nucleotide triphosphate hydrolases"/>
    <property type="match status" value="1"/>
</dbReference>
<dbReference type="HAMAP" id="MF_00321">
    <property type="entry name" value="GTPase_EngB"/>
    <property type="match status" value="1"/>
</dbReference>
<dbReference type="InterPro" id="IPR030393">
    <property type="entry name" value="G_ENGB_dom"/>
</dbReference>
<dbReference type="InterPro" id="IPR006073">
    <property type="entry name" value="GTP-bd"/>
</dbReference>
<dbReference type="InterPro" id="IPR019987">
    <property type="entry name" value="GTP-bd_ribosome_bio_YsxC"/>
</dbReference>
<dbReference type="InterPro" id="IPR027417">
    <property type="entry name" value="P-loop_NTPase"/>
</dbReference>
<dbReference type="InterPro" id="IPR005225">
    <property type="entry name" value="Small_GTP-bd"/>
</dbReference>
<dbReference type="NCBIfam" id="TIGR03598">
    <property type="entry name" value="GTPase_YsxC"/>
    <property type="match status" value="1"/>
</dbReference>
<dbReference type="NCBIfam" id="TIGR00231">
    <property type="entry name" value="small_GTP"/>
    <property type="match status" value="1"/>
</dbReference>
<dbReference type="PANTHER" id="PTHR11649:SF13">
    <property type="entry name" value="ENGB-TYPE G DOMAIN-CONTAINING PROTEIN"/>
    <property type="match status" value="1"/>
</dbReference>
<dbReference type="PANTHER" id="PTHR11649">
    <property type="entry name" value="MSS1/TRME-RELATED GTP-BINDING PROTEIN"/>
    <property type="match status" value="1"/>
</dbReference>
<dbReference type="Pfam" id="PF01926">
    <property type="entry name" value="MMR_HSR1"/>
    <property type="match status" value="1"/>
</dbReference>
<dbReference type="SUPFAM" id="SSF52540">
    <property type="entry name" value="P-loop containing nucleoside triphosphate hydrolases"/>
    <property type="match status" value="1"/>
</dbReference>
<dbReference type="PROSITE" id="PS51706">
    <property type="entry name" value="G_ENGB"/>
    <property type="match status" value="1"/>
</dbReference>
<reference key="1">
    <citation type="journal article" date="2008" name="J. Bacteriol.">
        <title>Genome sequence of Lactobacillus helveticus: an organism distinguished by selective gene loss and IS element expansion.</title>
        <authorList>
            <person name="Callanan M."/>
            <person name="Kaleta P."/>
            <person name="O'Callaghan J."/>
            <person name="O'Sullivan O."/>
            <person name="Jordan K."/>
            <person name="McAuliffe O."/>
            <person name="Sangrador-Vegas A."/>
            <person name="Slattery L."/>
            <person name="Fitzgerald G.F."/>
            <person name="Beresford T."/>
            <person name="Ross R.P."/>
        </authorList>
    </citation>
    <scope>NUCLEOTIDE SEQUENCE [LARGE SCALE GENOMIC DNA]</scope>
    <source>
        <strain>DPC 4571</strain>
    </source>
</reference>